<name>COBL7_ORYSJ</name>
<dbReference type="EMBL" id="AL606587">
    <property type="protein sequence ID" value="CAE02786.2"/>
    <property type="molecule type" value="Genomic_DNA"/>
</dbReference>
<dbReference type="EMBL" id="AP014960">
    <property type="protein sequence ID" value="BAS90288.1"/>
    <property type="molecule type" value="Genomic_DNA"/>
</dbReference>
<dbReference type="FunCoup" id="Q7XR91">
    <property type="interactions" value="17"/>
</dbReference>
<dbReference type="STRING" id="39947.Q7XR91"/>
<dbReference type="GlyCosmos" id="Q7XR91">
    <property type="glycosylation" value="6 sites, No reported glycans"/>
</dbReference>
<dbReference type="PaxDb" id="39947-Q7XR91"/>
<dbReference type="EnsemblPlants" id="Os04t0540300-00">
    <property type="protein sequence ID" value="Os04t0540300-00"/>
    <property type="gene ID" value="Os04g0540300"/>
</dbReference>
<dbReference type="Gramene" id="Os04t0540300-00">
    <property type="protein sequence ID" value="Os04t0540300-00"/>
    <property type="gene ID" value="Os04g0540300"/>
</dbReference>
<dbReference type="eggNOG" id="ENOG502QT9D">
    <property type="taxonomic scope" value="Eukaryota"/>
</dbReference>
<dbReference type="HOGENOM" id="CLU_038120_0_0_1"/>
<dbReference type="InParanoid" id="Q7XR91"/>
<dbReference type="OMA" id="EPPGWKL"/>
<dbReference type="Proteomes" id="UP000000763">
    <property type="component" value="Chromosome 4"/>
</dbReference>
<dbReference type="Proteomes" id="UP000059680">
    <property type="component" value="Chromosome 4"/>
</dbReference>
<dbReference type="GO" id="GO:0005886">
    <property type="term" value="C:plasma membrane"/>
    <property type="evidence" value="ECO:0000318"/>
    <property type="project" value="GO_Central"/>
</dbReference>
<dbReference type="GO" id="GO:0098552">
    <property type="term" value="C:side of membrane"/>
    <property type="evidence" value="ECO:0007669"/>
    <property type="project" value="UniProtKB-KW"/>
</dbReference>
<dbReference type="GO" id="GO:0010215">
    <property type="term" value="P:cellulose microfibril organization"/>
    <property type="evidence" value="ECO:0007669"/>
    <property type="project" value="InterPro"/>
</dbReference>
<dbReference type="GO" id="GO:0052324">
    <property type="term" value="P:plant-type cell wall cellulose biosynthetic process"/>
    <property type="evidence" value="ECO:0000318"/>
    <property type="project" value="GO_Central"/>
</dbReference>
<dbReference type="InterPro" id="IPR056900">
    <property type="entry name" value="COB_C"/>
</dbReference>
<dbReference type="InterPro" id="IPR006918">
    <property type="entry name" value="COBRA_pln"/>
</dbReference>
<dbReference type="PANTHER" id="PTHR31673:SF30">
    <property type="entry name" value="COBRA-LIKE PROTEIN 6"/>
    <property type="match status" value="1"/>
</dbReference>
<dbReference type="PANTHER" id="PTHR31673">
    <property type="entry name" value="PROTEIN COBRA"/>
    <property type="match status" value="1"/>
</dbReference>
<dbReference type="Pfam" id="PF25079">
    <property type="entry name" value="COB_C"/>
    <property type="match status" value="1"/>
</dbReference>
<dbReference type="Pfam" id="PF04833">
    <property type="entry name" value="COBRA"/>
    <property type="match status" value="1"/>
</dbReference>
<dbReference type="PIRSF" id="PIRSF038122">
    <property type="entry name" value="COBRA"/>
    <property type="match status" value="1"/>
</dbReference>
<comment type="function">
    <text evidence="1">Involved in determining the orientation of cell expansion, probably by playing an important role in cellulose deposition. May act by recruiting cellulose synthesizing complexes to discrete positions on the cell surface (By similarity).</text>
</comment>
<comment type="subcellular location">
    <subcellularLocation>
        <location evidence="3">Cell membrane</location>
        <topology evidence="3">Lipid-anchor</topology>
        <topology evidence="3">GPI-anchor</topology>
    </subcellularLocation>
</comment>
<comment type="similarity">
    <text evidence="3">Belongs to the COBRA family.</text>
</comment>
<accession>Q7XR91</accession>
<accession>A0A0P0WCU4</accession>
<proteinExistence type="inferred from homology"/>
<evidence type="ECO:0000250" key="1"/>
<evidence type="ECO:0000255" key="2"/>
<evidence type="ECO:0000305" key="3"/>
<organism>
    <name type="scientific">Oryza sativa subsp. japonica</name>
    <name type="common">Rice</name>
    <dbReference type="NCBI Taxonomy" id="39947"/>
    <lineage>
        <taxon>Eukaryota</taxon>
        <taxon>Viridiplantae</taxon>
        <taxon>Streptophyta</taxon>
        <taxon>Embryophyta</taxon>
        <taxon>Tracheophyta</taxon>
        <taxon>Spermatophyta</taxon>
        <taxon>Magnoliopsida</taxon>
        <taxon>Liliopsida</taxon>
        <taxon>Poales</taxon>
        <taxon>Poaceae</taxon>
        <taxon>BOP clade</taxon>
        <taxon>Oryzoideae</taxon>
        <taxon>Oryzeae</taxon>
        <taxon>Oryzinae</taxon>
        <taxon>Oryza</taxon>
        <taxon>Oryza sativa</taxon>
    </lineage>
</organism>
<protein>
    <recommendedName>
        <fullName>COBRA-like protein 7</fullName>
    </recommendedName>
    <alternativeName>
        <fullName>Protein BRITTLE CULM1-like P1</fullName>
    </alternativeName>
</protein>
<sequence>MDVDQLILFVFVCCLSSRFADAYDPVDPNGNIIINWDFQSIENVYTVMVSVHNHQLYRHIEQPGWRLSWRWAGNEIIWGMTGAEATEQGDCHRIRGATRPHCCEKQPVIVDLPPGTPYNNQVSSCCRGGVLSSLTQNNRTSTAAFQMVVGGFRRATYHDGDRGPALPSRFGVGVPGYSCSNATKVNATSSERFLLPRARAPCAVTWQVTCTYSQFMEAASPTCCVSLSSFYNSTIVPCPRCSCGCPRSPTAPQCISEGEKPELPAGDGEAVAPVFRCTDHMCPVRVHWHVKISYREYWRVKVTITNYNQVKNYSDWNLVVQHPNLRSLTQLFSFNYQPLIEYGTLNDTGMFWGIQYYNEMMLQDGNVQTEMILKKDKSDFTFSGGWAFPRRVYFDGHECVMPPPDQYPLLPNGGPDSRVSAAQLIASSCLLLPFIFLIM</sequence>
<feature type="signal peptide" evidence="2">
    <location>
        <begin position="1"/>
        <end position="22"/>
    </location>
</feature>
<feature type="chain" id="PRO_0000247639" description="COBRA-like protein 7">
    <location>
        <begin position="23"/>
        <end position="412"/>
    </location>
</feature>
<feature type="propeptide" id="PRO_0000247640" description="Removed in mature form" evidence="2">
    <location>
        <begin position="413"/>
        <end position="439"/>
    </location>
</feature>
<feature type="lipid moiety-binding region" description="GPI-anchor amidated asparagine" evidence="2">
    <location>
        <position position="412"/>
    </location>
</feature>
<feature type="glycosylation site" description="N-linked (GlcNAc...) asparagine" evidence="2">
    <location>
        <position position="138"/>
    </location>
</feature>
<feature type="glycosylation site" description="N-linked (GlcNAc...) asparagine" evidence="2">
    <location>
        <position position="181"/>
    </location>
</feature>
<feature type="glycosylation site" description="N-linked (GlcNAc...) asparagine" evidence="2">
    <location>
        <position position="186"/>
    </location>
</feature>
<feature type="glycosylation site" description="N-linked (GlcNAc...) asparagine" evidence="2">
    <location>
        <position position="232"/>
    </location>
</feature>
<feature type="glycosylation site" description="N-linked (GlcNAc...) asparagine" evidence="2">
    <location>
        <position position="312"/>
    </location>
</feature>
<feature type="glycosylation site" description="N-linked (GlcNAc...) asparagine" evidence="2">
    <location>
        <position position="346"/>
    </location>
</feature>
<gene>
    <name type="primary">BC1LP1</name>
    <name type="ordered locus">Os04g0540300</name>
    <name type="ordered locus">LOC_Os04g45700</name>
    <name type="ORF">OSJNBa0011L07.10</name>
</gene>
<reference key="1">
    <citation type="journal article" date="2002" name="Nature">
        <title>Sequence and analysis of rice chromosome 4.</title>
        <authorList>
            <person name="Feng Q."/>
            <person name="Zhang Y."/>
            <person name="Hao P."/>
            <person name="Wang S."/>
            <person name="Fu G."/>
            <person name="Huang Y."/>
            <person name="Li Y."/>
            <person name="Zhu J."/>
            <person name="Liu Y."/>
            <person name="Hu X."/>
            <person name="Jia P."/>
            <person name="Zhang Y."/>
            <person name="Zhao Q."/>
            <person name="Ying K."/>
            <person name="Yu S."/>
            <person name="Tang Y."/>
            <person name="Weng Q."/>
            <person name="Zhang L."/>
            <person name="Lu Y."/>
            <person name="Mu J."/>
            <person name="Lu Y."/>
            <person name="Zhang L.S."/>
            <person name="Yu Z."/>
            <person name="Fan D."/>
            <person name="Liu X."/>
            <person name="Lu T."/>
            <person name="Li C."/>
            <person name="Wu Y."/>
            <person name="Sun T."/>
            <person name="Lei H."/>
            <person name="Li T."/>
            <person name="Hu H."/>
            <person name="Guan J."/>
            <person name="Wu M."/>
            <person name="Zhang R."/>
            <person name="Zhou B."/>
            <person name="Chen Z."/>
            <person name="Chen L."/>
            <person name="Jin Z."/>
            <person name="Wang R."/>
            <person name="Yin H."/>
            <person name="Cai Z."/>
            <person name="Ren S."/>
            <person name="Lv G."/>
            <person name="Gu W."/>
            <person name="Zhu G."/>
            <person name="Tu Y."/>
            <person name="Jia J."/>
            <person name="Zhang Y."/>
            <person name="Chen J."/>
            <person name="Kang H."/>
            <person name="Chen X."/>
            <person name="Shao C."/>
            <person name="Sun Y."/>
            <person name="Hu Q."/>
            <person name="Zhang X."/>
            <person name="Zhang W."/>
            <person name="Wang L."/>
            <person name="Ding C."/>
            <person name="Sheng H."/>
            <person name="Gu J."/>
            <person name="Chen S."/>
            <person name="Ni L."/>
            <person name="Zhu F."/>
            <person name="Chen W."/>
            <person name="Lan L."/>
            <person name="Lai Y."/>
            <person name="Cheng Z."/>
            <person name="Gu M."/>
            <person name="Jiang J."/>
            <person name="Li J."/>
            <person name="Hong G."/>
            <person name="Xue Y."/>
            <person name="Han B."/>
        </authorList>
    </citation>
    <scope>NUCLEOTIDE SEQUENCE [LARGE SCALE GENOMIC DNA]</scope>
    <source>
        <strain>cv. Nipponbare</strain>
    </source>
</reference>
<reference key="2">
    <citation type="journal article" date="2005" name="Nature">
        <title>The map-based sequence of the rice genome.</title>
        <authorList>
            <consortium name="International rice genome sequencing project (IRGSP)"/>
        </authorList>
    </citation>
    <scope>NUCLEOTIDE SEQUENCE [LARGE SCALE GENOMIC DNA]</scope>
    <source>
        <strain>cv. Nipponbare</strain>
    </source>
</reference>
<reference key="3">
    <citation type="journal article" date="2013" name="Rice">
        <title>Improvement of the Oryza sativa Nipponbare reference genome using next generation sequence and optical map data.</title>
        <authorList>
            <person name="Kawahara Y."/>
            <person name="de la Bastide M."/>
            <person name="Hamilton J.P."/>
            <person name="Kanamori H."/>
            <person name="McCombie W.R."/>
            <person name="Ouyang S."/>
            <person name="Schwartz D.C."/>
            <person name="Tanaka T."/>
            <person name="Wu J."/>
            <person name="Zhou S."/>
            <person name="Childs K.L."/>
            <person name="Davidson R.M."/>
            <person name="Lin H."/>
            <person name="Quesada-Ocampo L."/>
            <person name="Vaillancourt B."/>
            <person name="Sakai H."/>
            <person name="Lee S.S."/>
            <person name="Kim J."/>
            <person name="Numa H."/>
            <person name="Itoh T."/>
            <person name="Buell C.R."/>
            <person name="Matsumoto T."/>
        </authorList>
    </citation>
    <scope>GENOME REANNOTATION</scope>
    <source>
        <strain>cv. Nipponbare</strain>
    </source>
</reference>
<reference key="4">
    <citation type="journal article" date="2003" name="Plant Cell">
        <title>BRITTLE CULM1, which encodes a COBRA-like protein, affects the mechanical properties of rice plants.</title>
        <authorList>
            <person name="Li Y."/>
            <person name="Qian Q."/>
            <person name="Zhou Y."/>
            <person name="Yan M."/>
            <person name="Sun L."/>
            <person name="Zhang M."/>
            <person name="Fu Z."/>
            <person name="Wang Y."/>
            <person name="Han B."/>
            <person name="Pang X."/>
            <person name="Chen M."/>
            <person name="Li J."/>
        </authorList>
    </citation>
    <scope>IDENTIFICATION</scope>
    <scope>NOMENCLATURE</scope>
</reference>
<keyword id="KW-1003">Cell membrane</keyword>
<keyword id="KW-0325">Glycoprotein</keyword>
<keyword id="KW-0336">GPI-anchor</keyword>
<keyword id="KW-0449">Lipoprotein</keyword>
<keyword id="KW-0472">Membrane</keyword>
<keyword id="KW-1185">Reference proteome</keyword>
<keyword id="KW-0732">Signal</keyword>